<name>LEXA_ECOLI</name>
<comment type="function">
    <text evidence="1 2 3 4 6 7">Represses a number of genes involved in the response to DNA damage (SOS response), including recA and lexA. Binds to the 16 bp palindromic sequence 5'-CTGTATATATATACAG-3'. In the presence of single-stranded DNA, RecA interacts with LexA causing an autocatalytic cleavage which disrupts the DNA-binding part of LexA, leading to derepression of the SOS regulon and eventually DNA repair. Implicated in hydroxy radical-mediated cell death induced by hydroxyurea treatment (PubMed:20005847). The SOS response controls an apoptotic-like death (ALD) induced (in the absence of the mazE-mazF toxin-antitoxin module) in response to DNA damaging agents that is mediated by RecA and LexA (PubMed:22412352). Genetic interactions among priB, dam, lexA, nagC, polA, rdgB, rdgB, rep and uup link the PriA-PriB replication restart pathway to DNA double-strand break repair (PubMed:36326440).</text>
</comment>
<comment type="catalytic activity">
    <reaction evidence="1">
        <text>Hydrolysis of Ala-|-Gly bond in repressor LexA.</text>
        <dbReference type="EC" id="3.4.21.88"/>
    </reaction>
</comment>
<comment type="subunit">
    <text>Homodimer.</text>
</comment>
<comment type="interaction">
    <interactant intactId="EBI-553416">
        <id>P0A7C2</id>
    </interactant>
    <interactant intactId="EBI-553416">
        <id>P0A7C2</id>
        <label>lexA</label>
    </interactant>
    <organismsDiffer>false</organismsDiffer>
    <experiments>2</experiments>
</comment>
<comment type="interaction">
    <interactant intactId="EBI-553416">
        <id>P0A7C2</id>
    </interactant>
    <interactant intactId="EBI-543949">
        <id>P0A7W1</id>
        <label>rpsE</label>
    </interactant>
    <organismsDiffer>false</organismsDiffer>
    <experiments>2</experiments>
</comment>
<comment type="disruption phenotype">
    <text evidence="4">Cells are filamented, accumulate DNA double-strand breaks, have viability defects at 10 ng/ml ciprofoxacin. Synthetically lethal in combination with a priB deletion.</text>
</comment>
<comment type="similarity">
    <text evidence="1">Belongs to the peptidase S24 family.</text>
</comment>
<organism>
    <name type="scientific">Escherichia coli (strain K12)</name>
    <dbReference type="NCBI Taxonomy" id="83333"/>
    <lineage>
        <taxon>Bacteria</taxon>
        <taxon>Pseudomonadati</taxon>
        <taxon>Pseudomonadota</taxon>
        <taxon>Gammaproteobacteria</taxon>
        <taxon>Enterobacterales</taxon>
        <taxon>Enterobacteriaceae</taxon>
        <taxon>Escherichia</taxon>
    </lineage>
</organism>
<accession>P0A7C2</accession>
<accession>P03033</accession>
<accession>Q2M6R1</accession>
<proteinExistence type="evidence at protein level"/>
<reference key="1">
    <citation type="journal article" date="1981" name="Cell">
        <title>Nucleotide sequence of the lexA gene of E. coli.</title>
        <authorList>
            <person name="Horii T."/>
            <person name="Ogawa T."/>
            <person name="Ogawa H."/>
        </authorList>
    </citation>
    <scope>NUCLEOTIDE SEQUENCE [GENOMIC DNA]</scope>
</reference>
<reference key="2">
    <citation type="journal article" date="1981" name="Nucleic Acids Res.">
        <title>Nucleotide sequence of the lexA gene of Escherichia coli K-12.</title>
        <authorList>
            <person name="Markham B.E."/>
            <person name="Little J.W."/>
            <person name="Mount D.W."/>
        </authorList>
    </citation>
    <scope>NUCLEOTIDE SEQUENCE [GENOMIC DNA]</scope>
    <scope>MUTANT LEXA3</scope>
    <source>
        <strain>K12</strain>
    </source>
</reference>
<reference key="3">
    <citation type="journal article" date="1993" name="Nucleic Acids Res.">
        <title>Analysis of the Escherichia coli genome. IV. DNA sequence of the region from 89.2 to 92.8 minutes.</title>
        <authorList>
            <person name="Blattner F.R."/>
            <person name="Burland V.D."/>
            <person name="Plunkett G. III"/>
            <person name="Sofia H.J."/>
            <person name="Daniels D.L."/>
        </authorList>
    </citation>
    <scope>NUCLEOTIDE SEQUENCE [LARGE SCALE GENOMIC DNA]</scope>
    <source>
        <strain>K12 / MG1655 / ATCC 47076</strain>
    </source>
</reference>
<reference key="4">
    <citation type="journal article" date="1997" name="Science">
        <title>The complete genome sequence of Escherichia coli K-12.</title>
        <authorList>
            <person name="Blattner F.R."/>
            <person name="Plunkett G. III"/>
            <person name="Bloch C.A."/>
            <person name="Perna N.T."/>
            <person name="Burland V."/>
            <person name="Riley M."/>
            <person name="Collado-Vides J."/>
            <person name="Glasner J.D."/>
            <person name="Rode C.K."/>
            <person name="Mayhew G.F."/>
            <person name="Gregor J."/>
            <person name="Davis N.W."/>
            <person name="Kirkpatrick H.A."/>
            <person name="Goeden M.A."/>
            <person name="Rose D.J."/>
            <person name="Mau B."/>
            <person name="Shao Y."/>
        </authorList>
    </citation>
    <scope>NUCLEOTIDE SEQUENCE [LARGE SCALE GENOMIC DNA]</scope>
    <source>
        <strain>K12 / MG1655 / ATCC 47076</strain>
    </source>
</reference>
<reference key="5">
    <citation type="journal article" date="2006" name="Mol. Syst. Biol.">
        <title>Highly accurate genome sequences of Escherichia coli K-12 strains MG1655 and W3110.</title>
        <authorList>
            <person name="Hayashi K."/>
            <person name="Morooka N."/>
            <person name="Yamamoto Y."/>
            <person name="Fujita K."/>
            <person name="Isono K."/>
            <person name="Choi S."/>
            <person name="Ohtsubo E."/>
            <person name="Baba T."/>
            <person name="Wanner B.L."/>
            <person name="Mori H."/>
            <person name="Horiuchi T."/>
        </authorList>
    </citation>
    <scope>NUCLEOTIDE SEQUENCE [LARGE SCALE GENOMIC DNA]</scope>
    <source>
        <strain>K12 / W3110 / ATCC 27325 / DSM 5911</strain>
    </source>
</reference>
<reference key="6">
    <citation type="journal article" date="1990" name="Mol. Gen. Genet.">
        <title>Genetic analysis of the LexA repressor: isolation and characterization of LexA(Def) mutant proteins.</title>
        <authorList>
            <person name="Oertel-Buchheit P."/>
            <person name="Lamerichs R.M."/>
            <person name="Schnarr M."/>
            <person name="Granger-Schnarr M."/>
        </authorList>
    </citation>
    <scope>NUCLEOTIDE SEQUENCE [GENOMIC DNA] OF 1-93</scope>
</reference>
<reference key="7">
    <citation type="journal article" date="1981" name="Nucleic Acids Res.">
        <title>Organization of the lexA gene of Escherichia coli and nucleotide sequence of the regulatory region.</title>
        <authorList>
            <person name="Miki T."/>
            <person name="Ebina Y."/>
            <person name="Kishi F."/>
            <person name="Nakazawa A."/>
        </authorList>
    </citation>
    <scope>NUCLEOTIDE SEQUENCE [GENOMIC DNA] OF 1-23</scope>
</reference>
<reference key="8">
    <citation type="submission" date="1992-09" db="EMBL/GenBank/DDBJ databases">
        <authorList>
            <person name="Lilley P.E."/>
            <person name="Dixon N.E."/>
        </authorList>
    </citation>
    <scope>NUCLEOTIDE SEQUENCE [GENOMIC DNA] OF 195-202</scope>
    <source>
        <strain>K12</strain>
    </source>
</reference>
<reference key="9">
    <citation type="journal article" date="1981" name="Proc. Natl. Acad. Sci. U.S.A.">
        <title>Purified lexA protein is a repressor of the recA and lexA genes.</title>
        <authorList>
            <person name="Little J.W."/>
            <person name="Mount D.W."/>
            <person name="Yanisch-Perron C.R."/>
        </authorList>
    </citation>
    <scope>FUNCTION</scope>
</reference>
<reference key="10">
    <citation type="journal article" date="1981" name="Proc. Natl. Acad. Sci. U.S.A.">
        <title>Mechanism of action of the lexA gene product.</title>
        <authorList>
            <person name="Brent R."/>
            <person name="Ptashne M."/>
        </authorList>
    </citation>
    <scope>FUNCTION</scope>
</reference>
<reference key="11">
    <citation type="journal article" date="2009" name="Mol. Cell">
        <title>Hydroxyurea induces hydroxyl radical-mediated cell death in Escherichia coli.</title>
        <authorList>
            <person name="Davies B.W."/>
            <person name="Kohanski M.A."/>
            <person name="Simmons L.A."/>
            <person name="Winkler J.A."/>
            <person name="Collins J.J."/>
            <person name="Walker G.C."/>
        </authorList>
    </citation>
    <scope>ROLE IN HYDROXYUREA RESISTANCE</scope>
    <source>
        <strain>K12 / MC4100 / ATCC 35695 / DSM 6574</strain>
    </source>
</reference>
<reference key="12">
    <citation type="journal article" date="2012" name="PLoS Biol.">
        <title>Two programmed cell death systems in Escherichia coli: an apoptotic-like death is inhibited by the mazEF-mediated death pathway.</title>
        <authorList>
            <person name="Erental A."/>
            <person name="Sharon I."/>
            <person name="Engelberg-Kulka H."/>
        </authorList>
    </citation>
    <scope>FUNCTION</scope>
    <source>
        <strain>K12 / MC4100 / ATCC 35695 / DSM 6574</strain>
    </source>
</reference>
<reference key="13">
    <citation type="journal article" date="2022" name="G3 (Bethesda)">
        <title>Identification of genetic interactions with priB links the PriA/PriB DNA replication restart pathway to double-strand DNA break repair in Escherichia coli.</title>
        <authorList>
            <person name="McKenzie A.M."/>
            <person name="Henry C."/>
            <person name="Myers K.S."/>
            <person name="Place M.M."/>
            <person name="Keck J.L."/>
        </authorList>
    </citation>
    <scope>GENETIC INTERACTION</scope>
    <scope>DISRUPTION PHENOTYPE</scope>
    <source>
        <strain>K12 / MG1655 / ATCC 47076</strain>
    </source>
</reference>
<reference key="14">
    <citation type="journal article" date="1989" name="Proc. Natl. Acad. Sci. U.S.A.">
        <title>The amino-terminal domain of LexA repressor is alpha-helical but differs from canonical helix-turn-helix proteins: a two-dimensional 1H NMR study.</title>
        <authorList>
            <person name="Lamerichs R.M.J.N."/>
            <person name="Padilla A."/>
            <person name="Boelens R."/>
            <person name="Kaptein R."/>
            <person name="Ottleben G."/>
            <person name="Rueterjans H."/>
            <person name="Granger-Schnarr M."/>
            <person name="Oertel P."/>
            <person name="Schnarr M."/>
        </authorList>
    </citation>
    <scope>STRUCTURE BY NMR</scope>
</reference>
<reference key="15">
    <citation type="journal article" date="1994" name="EMBO J.">
        <title>Solution structure of the LexA repressor DNA binding domain determined by 1H NMR spectroscopy.</title>
        <authorList>
            <person name="Fogh R.H."/>
            <person name="Ottleben G."/>
            <person name="Rueterjans H."/>
            <person name="Schnarr M."/>
            <person name="Boelens R."/>
            <person name="Kaptein R."/>
        </authorList>
    </citation>
    <scope>STRUCTURE BY NMR</scope>
</reference>
<reference key="16">
    <citation type="journal article" date="1995" name="Proteins">
        <title>A model for the LexA repressor DNA complex.</title>
        <authorList>
            <person name="Knegtel R.M.A."/>
            <person name="Fogh R.H."/>
            <person name="Ottleben G."/>
            <person name="Rueterjans H."/>
            <person name="Dumoulin P."/>
            <person name="Schnarr M."/>
            <person name="Boelens R."/>
            <person name="Kaptein R."/>
        </authorList>
    </citation>
    <scope>3D-STRUCTURE MODELING</scope>
</reference>
<feature type="chain" id="PRO_0000170031" description="LexA repressor">
    <location>
        <begin position="1"/>
        <end position="202"/>
    </location>
</feature>
<feature type="DNA-binding region" description="H-T-H motif" evidence="1">
    <location>
        <begin position="28"/>
        <end position="48"/>
    </location>
</feature>
<feature type="active site" description="For autocatalytic cleavage activity" evidence="1">
    <location>
        <position position="119"/>
    </location>
</feature>
<feature type="active site" description="For autocatalytic cleavage activity" evidence="1">
    <location>
        <position position="156"/>
    </location>
</feature>
<feature type="site" description="Cleavage; by autolysis">
    <location>
        <begin position="84"/>
        <end position="85"/>
    </location>
</feature>
<feature type="sequence variant" description="In lexA3, resistant to cleavage. Increased sensitivity to hydroxyurea." evidence="2 5">
    <original>G</original>
    <variation>D</variation>
    <location>
        <position position="85"/>
    </location>
</feature>
<feature type="helix" evidence="8">
    <location>
        <begin position="6"/>
        <end position="22"/>
    </location>
</feature>
<feature type="helix" evidence="8">
    <location>
        <begin position="28"/>
        <end position="34"/>
    </location>
</feature>
<feature type="helix" evidence="8">
    <location>
        <begin position="40"/>
        <end position="52"/>
    </location>
</feature>
<feature type="strand" evidence="8">
    <location>
        <begin position="55"/>
        <end position="58"/>
    </location>
</feature>
<feature type="strand" evidence="8">
    <location>
        <begin position="60"/>
        <end position="64"/>
    </location>
</feature>
<feature type="strand" evidence="8">
    <location>
        <begin position="66"/>
        <end position="68"/>
    </location>
</feature>
<feature type="strand" evidence="8">
    <location>
        <begin position="74"/>
        <end position="79"/>
    </location>
</feature>
<feature type="helix" evidence="8">
    <location>
        <begin position="91"/>
        <end position="93"/>
    </location>
</feature>
<feature type="strand" evidence="8">
    <location>
        <begin position="94"/>
        <end position="98"/>
    </location>
</feature>
<feature type="helix" evidence="8">
    <location>
        <begin position="102"/>
        <end position="104"/>
    </location>
</feature>
<feature type="strand" evidence="8">
    <location>
        <begin position="105"/>
        <end position="107"/>
    </location>
</feature>
<feature type="strand" evidence="8">
    <location>
        <begin position="111"/>
        <end position="114"/>
    </location>
</feature>
<feature type="helix" evidence="8">
    <location>
        <begin position="121"/>
        <end position="123"/>
    </location>
</feature>
<feature type="strand" evidence="8">
    <location>
        <begin position="130"/>
        <end position="135"/>
    </location>
</feature>
<feature type="strand" evidence="8">
    <location>
        <begin position="143"/>
        <end position="149"/>
    </location>
</feature>
<feature type="strand" evidence="8">
    <location>
        <begin position="152"/>
        <end position="161"/>
    </location>
</feature>
<feature type="strand" evidence="8">
    <location>
        <begin position="164"/>
        <end position="168"/>
    </location>
</feature>
<feature type="strand" evidence="9">
    <location>
        <begin position="172"/>
        <end position="174"/>
    </location>
</feature>
<feature type="strand" evidence="8">
    <location>
        <begin position="177"/>
        <end position="180"/>
    </location>
</feature>
<feature type="turn" evidence="8">
    <location>
        <begin position="181"/>
        <end position="183"/>
    </location>
</feature>
<feature type="strand" evidence="8">
    <location>
        <begin position="186"/>
        <end position="197"/>
    </location>
</feature>
<protein>
    <recommendedName>
        <fullName evidence="1">LexA repressor</fullName>
        <ecNumber evidence="1">3.4.21.88</ecNumber>
    </recommendedName>
</protein>
<sequence>MKALTARQQEVFDLIRDHISQTGMPPTRAEIAQRLGFRSPNAAEEHLKALARKGVIEIVSGASRGIRLLQEEEEGLPLVGRVAAGEPLLAQQHIEGHYQVDPSLFKPNADFLLRVSGMSMKDIGIMDGDLLAVHKTQDVRNGQVVVARIDDEVTVKRLKKQGNKVELLPENSEFKPIVVDLRQQSFTIEGLAVGVIRNGDWL</sequence>
<evidence type="ECO:0000255" key="1">
    <source>
        <dbReference type="HAMAP-Rule" id="MF_00015"/>
    </source>
</evidence>
<evidence type="ECO:0000269" key="2">
    <source>
    </source>
</evidence>
<evidence type="ECO:0000269" key="3">
    <source>
    </source>
</evidence>
<evidence type="ECO:0000269" key="4">
    <source>
    </source>
</evidence>
<evidence type="ECO:0000269" key="5">
    <source>
    </source>
</evidence>
<evidence type="ECO:0000269" key="6">
    <source>
    </source>
</evidence>
<evidence type="ECO:0000269" key="7">
    <source>
    </source>
</evidence>
<evidence type="ECO:0007829" key="8">
    <source>
        <dbReference type="PDB" id="1JHF"/>
    </source>
</evidence>
<evidence type="ECO:0007829" key="9">
    <source>
        <dbReference type="PDB" id="3JSO"/>
    </source>
</evidence>
<keyword id="KW-0002">3D-structure</keyword>
<keyword id="KW-0068">Autocatalytic cleavage</keyword>
<keyword id="KW-0227">DNA damage</keyword>
<keyword id="KW-0234">DNA repair</keyword>
<keyword id="KW-0235">DNA replication</keyword>
<keyword id="KW-0238">DNA-binding</keyword>
<keyword id="KW-0378">Hydrolase</keyword>
<keyword id="KW-1185">Reference proteome</keyword>
<keyword id="KW-0678">Repressor</keyword>
<keyword id="KW-0742">SOS response</keyword>
<keyword id="KW-0804">Transcription</keyword>
<keyword id="KW-0805">Transcription regulation</keyword>
<dbReference type="EC" id="3.4.21.88" evidence="1"/>
<dbReference type="EMBL" id="J01643">
    <property type="protein sequence ID" value="AAA24067.1"/>
    <property type="molecule type" value="Genomic_DNA"/>
</dbReference>
<dbReference type="EMBL" id="U00006">
    <property type="protein sequence ID" value="AAC43137.1"/>
    <property type="molecule type" value="Genomic_DNA"/>
</dbReference>
<dbReference type="EMBL" id="U00096">
    <property type="protein sequence ID" value="AAC77013.1"/>
    <property type="molecule type" value="Genomic_DNA"/>
</dbReference>
<dbReference type="EMBL" id="AP009048">
    <property type="protein sequence ID" value="BAE78045.1"/>
    <property type="molecule type" value="Genomic_DNA"/>
</dbReference>
<dbReference type="EMBL" id="L02362">
    <property type="protein sequence ID" value="AAA24068.1"/>
    <property type="molecule type" value="Genomic_DNA"/>
</dbReference>
<dbReference type="PIR" id="A90808">
    <property type="entry name" value="ILEC"/>
</dbReference>
<dbReference type="RefSeq" id="NP_418467.1">
    <property type="nucleotide sequence ID" value="NC_000913.3"/>
</dbReference>
<dbReference type="RefSeq" id="WP_000646078.1">
    <property type="nucleotide sequence ID" value="NZ_STEB01000022.1"/>
</dbReference>
<dbReference type="PDB" id="1JHC">
    <property type="method" value="X-ray"/>
    <property type="resolution" value="2.00 A"/>
    <property type="chains" value="A=68-202"/>
</dbReference>
<dbReference type="PDB" id="1JHE">
    <property type="method" value="X-ray"/>
    <property type="resolution" value="2.50 A"/>
    <property type="chains" value="A/B=68-202"/>
</dbReference>
<dbReference type="PDB" id="1JHF">
    <property type="method" value="X-ray"/>
    <property type="resolution" value="1.80 A"/>
    <property type="chains" value="A/B=1-202"/>
</dbReference>
<dbReference type="PDB" id="1JHH">
    <property type="method" value="X-ray"/>
    <property type="resolution" value="2.10 A"/>
    <property type="chains" value="A/B=1-202"/>
</dbReference>
<dbReference type="PDB" id="1LEA">
    <property type="method" value="NMR"/>
    <property type="chains" value="A=1-84"/>
</dbReference>
<dbReference type="PDB" id="1LEB">
    <property type="method" value="NMR"/>
    <property type="chains" value="A=1-84"/>
</dbReference>
<dbReference type="PDB" id="3JSO">
    <property type="method" value="X-ray"/>
    <property type="resolution" value="2.29 A"/>
    <property type="chains" value="A/B=1-202"/>
</dbReference>
<dbReference type="PDB" id="3JSP">
    <property type="method" value="X-ray"/>
    <property type="resolution" value="2.90 A"/>
    <property type="chains" value="A/B=1-202"/>
</dbReference>
<dbReference type="PDB" id="3K3R">
    <property type="method" value="X-ray"/>
    <property type="resolution" value="3.20 A"/>
    <property type="chains" value="E/F=1-202"/>
</dbReference>
<dbReference type="PDB" id="7B5G">
    <property type="method" value="X-ray"/>
    <property type="resolution" value="2.40 A"/>
    <property type="chains" value="A/C/E/G=1-202"/>
</dbReference>
<dbReference type="PDB" id="8TRG">
    <property type="method" value="EM"/>
    <property type="resolution" value="2.93 A"/>
    <property type="chains" value="I/J=1-202"/>
</dbReference>
<dbReference type="PDBsum" id="1JHC"/>
<dbReference type="PDBsum" id="1JHE"/>
<dbReference type="PDBsum" id="1JHF"/>
<dbReference type="PDBsum" id="1JHH"/>
<dbReference type="PDBsum" id="1LEA"/>
<dbReference type="PDBsum" id="1LEB"/>
<dbReference type="PDBsum" id="3JSO"/>
<dbReference type="PDBsum" id="3JSP"/>
<dbReference type="PDBsum" id="3K3R"/>
<dbReference type="PDBsum" id="7B5G"/>
<dbReference type="PDBsum" id="8TRG"/>
<dbReference type="EMDB" id="EMD-41579"/>
<dbReference type="SMR" id="P0A7C2"/>
<dbReference type="BioGRID" id="4261718">
    <property type="interactions" value="45"/>
</dbReference>
<dbReference type="BioGRID" id="852838">
    <property type="interactions" value="8"/>
</dbReference>
<dbReference type="DIP" id="DIP-51082N"/>
<dbReference type="FunCoup" id="P0A7C2">
    <property type="interactions" value="435"/>
</dbReference>
<dbReference type="IntAct" id="P0A7C2">
    <property type="interactions" value="11"/>
</dbReference>
<dbReference type="STRING" id="511145.b4043"/>
<dbReference type="ChEMBL" id="CHEMBL4630871"/>
<dbReference type="MEROPS" id="S24.001"/>
<dbReference type="jPOST" id="P0A7C2"/>
<dbReference type="PaxDb" id="511145-b4043"/>
<dbReference type="EnsemblBacteria" id="AAC77013">
    <property type="protein sequence ID" value="AAC77013"/>
    <property type="gene ID" value="b4043"/>
</dbReference>
<dbReference type="GeneID" id="93777788"/>
<dbReference type="GeneID" id="948544"/>
<dbReference type="KEGG" id="ecj:JW4003"/>
<dbReference type="KEGG" id="eco:b4043"/>
<dbReference type="KEGG" id="ecoc:C3026_21850"/>
<dbReference type="PATRIC" id="fig|511145.12.peg.4160"/>
<dbReference type="EchoBASE" id="EB0528"/>
<dbReference type="eggNOG" id="COG1974">
    <property type="taxonomic scope" value="Bacteria"/>
</dbReference>
<dbReference type="HOGENOM" id="CLU_066192_45_3_6"/>
<dbReference type="InParanoid" id="P0A7C2"/>
<dbReference type="OMA" id="HVWLLPH"/>
<dbReference type="OrthoDB" id="9802364at2"/>
<dbReference type="PhylomeDB" id="P0A7C2"/>
<dbReference type="BioCyc" id="EcoCyc:PD00205"/>
<dbReference type="BRENDA" id="3.4.21.88">
    <property type="organism ID" value="2026"/>
</dbReference>
<dbReference type="EvolutionaryTrace" id="P0A7C2"/>
<dbReference type="PRO" id="PR:P0A7C2"/>
<dbReference type="Proteomes" id="UP000000625">
    <property type="component" value="Chromosome"/>
</dbReference>
<dbReference type="CollecTF" id="EXPREG_000007a0"/>
<dbReference type="GO" id="GO:0005829">
    <property type="term" value="C:cytosol"/>
    <property type="evidence" value="ECO:0000314"/>
    <property type="project" value="EcoCyc"/>
</dbReference>
<dbReference type="GO" id="GO:0032993">
    <property type="term" value="C:protein-DNA complex"/>
    <property type="evidence" value="ECO:0000353"/>
    <property type="project" value="CollecTF"/>
</dbReference>
<dbReference type="GO" id="GO:0003677">
    <property type="term" value="F:DNA binding"/>
    <property type="evidence" value="ECO:0000314"/>
    <property type="project" value="EcoliWiki"/>
</dbReference>
<dbReference type="GO" id="GO:0001217">
    <property type="term" value="F:DNA-binding transcription repressor activity"/>
    <property type="evidence" value="ECO:0000353"/>
    <property type="project" value="CollecTF"/>
</dbReference>
<dbReference type="GO" id="GO:0042802">
    <property type="term" value="F:identical protein binding"/>
    <property type="evidence" value="ECO:0000353"/>
    <property type="project" value="IntAct"/>
</dbReference>
<dbReference type="GO" id="GO:0043565">
    <property type="term" value="F:sequence-specific DNA binding"/>
    <property type="evidence" value="ECO:0000318"/>
    <property type="project" value="GO_Central"/>
</dbReference>
<dbReference type="GO" id="GO:0004252">
    <property type="term" value="F:serine-type endopeptidase activity"/>
    <property type="evidence" value="ECO:0007669"/>
    <property type="project" value="UniProtKB-UniRule"/>
</dbReference>
<dbReference type="GO" id="GO:0000976">
    <property type="term" value="F:transcription cis-regulatory region binding"/>
    <property type="evidence" value="ECO:0000353"/>
    <property type="project" value="CollecTF"/>
</dbReference>
<dbReference type="GO" id="GO:0006974">
    <property type="term" value="P:DNA damage response"/>
    <property type="evidence" value="ECO:0000315"/>
    <property type="project" value="EcoliWiki"/>
</dbReference>
<dbReference type="GO" id="GO:0006281">
    <property type="term" value="P:DNA repair"/>
    <property type="evidence" value="ECO:0007669"/>
    <property type="project" value="UniProtKB-UniRule"/>
</dbReference>
<dbReference type="GO" id="GO:0006260">
    <property type="term" value="P:DNA replication"/>
    <property type="evidence" value="ECO:0007669"/>
    <property type="project" value="UniProtKB-UniRule"/>
</dbReference>
<dbReference type="GO" id="GO:0006351">
    <property type="term" value="P:DNA-templated transcription"/>
    <property type="evidence" value="ECO:0000314"/>
    <property type="project" value="EcoCyc"/>
</dbReference>
<dbReference type="GO" id="GO:0045892">
    <property type="term" value="P:negative regulation of DNA-templated transcription"/>
    <property type="evidence" value="ECO:0000315"/>
    <property type="project" value="EcoliWiki"/>
</dbReference>
<dbReference type="GO" id="GO:0006508">
    <property type="term" value="P:proteolysis"/>
    <property type="evidence" value="ECO:0007669"/>
    <property type="project" value="InterPro"/>
</dbReference>
<dbReference type="GO" id="GO:0009432">
    <property type="term" value="P:SOS response"/>
    <property type="evidence" value="ECO:0000315"/>
    <property type="project" value="EcoCyc"/>
</dbReference>
<dbReference type="CDD" id="cd06529">
    <property type="entry name" value="S24_LexA-like"/>
    <property type="match status" value="1"/>
</dbReference>
<dbReference type="FunFam" id="1.10.10.10:FF:000009">
    <property type="entry name" value="LexA repressor"/>
    <property type="match status" value="1"/>
</dbReference>
<dbReference type="FunFam" id="2.10.109.10:FF:000001">
    <property type="entry name" value="LexA repressor"/>
    <property type="match status" value="1"/>
</dbReference>
<dbReference type="Gene3D" id="2.10.109.10">
    <property type="entry name" value="Umud Fragment, subunit A"/>
    <property type="match status" value="1"/>
</dbReference>
<dbReference type="Gene3D" id="1.10.10.10">
    <property type="entry name" value="Winged helix-like DNA-binding domain superfamily/Winged helix DNA-binding domain"/>
    <property type="match status" value="1"/>
</dbReference>
<dbReference type="HAMAP" id="MF_00015">
    <property type="entry name" value="LexA"/>
    <property type="match status" value="1"/>
</dbReference>
<dbReference type="InterPro" id="IPR006200">
    <property type="entry name" value="LexA"/>
</dbReference>
<dbReference type="InterPro" id="IPR039418">
    <property type="entry name" value="LexA-like"/>
</dbReference>
<dbReference type="InterPro" id="IPR036286">
    <property type="entry name" value="LexA/Signal_pep-like_sf"/>
</dbReference>
<dbReference type="InterPro" id="IPR006199">
    <property type="entry name" value="LexA_DNA-bd_dom"/>
</dbReference>
<dbReference type="InterPro" id="IPR050077">
    <property type="entry name" value="LexA_repressor"/>
</dbReference>
<dbReference type="InterPro" id="IPR006197">
    <property type="entry name" value="Peptidase_S24_LexA"/>
</dbReference>
<dbReference type="InterPro" id="IPR015927">
    <property type="entry name" value="Peptidase_S24_S26A/B/C"/>
</dbReference>
<dbReference type="InterPro" id="IPR036388">
    <property type="entry name" value="WH-like_DNA-bd_sf"/>
</dbReference>
<dbReference type="InterPro" id="IPR036390">
    <property type="entry name" value="WH_DNA-bd_sf"/>
</dbReference>
<dbReference type="NCBIfam" id="TIGR00498">
    <property type="entry name" value="lexA"/>
    <property type="match status" value="1"/>
</dbReference>
<dbReference type="PANTHER" id="PTHR33516">
    <property type="entry name" value="LEXA REPRESSOR"/>
    <property type="match status" value="1"/>
</dbReference>
<dbReference type="PANTHER" id="PTHR33516:SF2">
    <property type="entry name" value="LEXA REPRESSOR-RELATED"/>
    <property type="match status" value="1"/>
</dbReference>
<dbReference type="Pfam" id="PF01726">
    <property type="entry name" value="LexA_DNA_bind"/>
    <property type="match status" value="1"/>
</dbReference>
<dbReference type="Pfam" id="PF00717">
    <property type="entry name" value="Peptidase_S24"/>
    <property type="match status" value="1"/>
</dbReference>
<dbReference type="PRINTS" id="PR00726">
    <property type="entry name" value="LEXASERPTASE"/>
</dbReference>
<dbReference type="SUPFAM" id="SSF51306">
    <property type="entry name" value="LexA/Signal peptidase"/>
    <property type="match status" value="1"/>
</dbReference>
<dbReference type="SUPFAM" id="SSF46785">
    <property type="entry name" value="Winged helix' DNA-binding domain"/>
    <property type="match status" value="1"/>
</dbReference>
<gene>
    <name evidence="1" type="primary">lexA</name>
    <name type="synonym">exrA</name>
    <name type="synonym">spr</name>
    <name type="synonym">tsl</name>
    <name type="synonym">umuA</name>
    <name type="ordered locus">b4043</name>
    <name type="ordered locus">JW4003</name>
</gene>